<protein>
    <recommendedName>
        <fullName>Uncharacterized protein V14</fullName>
    </recommendedName>
</protein>
<dbReference type="EMBL" id="EU606015">
    <property type="protein sequence ID" value="ACF16998.1"/>
    <property type="molecule type" value="Genomic_DNA"/>
</dbReference>
<dbReference type="RefSeq" id="YP_002122375.1">
    <property type="nucleotide sequence ID" value="NC_011132.1"/>
</dbReference>
<dbReference type="SMR" id="B4YNF4"/>
<dbReference type="GeneID" id="6760341"/>
<dbReference type="KEGG" id="vg:6760341"/>
<dbReference type="Proteomes" id="UP000001863">
    <property type="component" value="Segment"/>
</dbReference>
<proteinExistence type="predicted"/>
<keyword id="KW-1185">Reference proteome</keyword>
<organismHost>
    <name type="scientific">Acanthamoeba polyphaga</name>
    <name type="common">Amoeba</name>
    <dbReference type="NCBI Taxonomy" id="5757"/>
</organismHost>
<sequence>MEKKEYLKKYYEENKPKIKKYYSKKIECPICGALYTRSNVTNHKKSQKHIKAINNDLESNYIKLKKDMKMLVDIEQKYQKLKEYNNTLHSYEDELKKTKEKYRNLKKVLEIMEN</sequence>
<accession>B4YNF4</accession>
<name>V14_SPTNK</name>
<organism>
    <name type="scientific">Sputnik virophage</name>
    <dbReference type="NCBI Taxonomy" id="543939"/>
    <lineage>
        <taxon>Viruses</taxon>
        <taxon>Varidnaviria</taxon>
        <taxon>Bamfordvirae</taxon>
        <taxon>Preplasmiviricota</taxon>
        <taxon>Maveriviricetes</taxon>
        <taxon>Priklausovirales</taxon>
        <taxon>Lavidaviridae</taxon>
        <taxon>Sputnikvirus</taxon>
        <taxon>Mimivirus-dependent virus Sputnik</taxon>
    </lineage>
</organism>
<feature type="chain" id="PRO_0000369822" description="Uncharacterized protein V14">
    <location>
        <begin position="1"/>
        <end position="114"/>
    </location>
</feature>
<reference key="1">
    <citation type="journal article" date="2008" name="Nature">
        <title>The virophage as a unique parasite of the giant mimivirus.</title>
        <authorList>
            <person name="La Scola B."/>
            <person name="Desnues C."/>
            <person name="Pagnier I."/>
            <person name="Robert C."/>
            <person name="Barrassi L."/>
            <person name="Fournous G."/>
            <person name="Merchat M."/>
            <person name="Suzan-Monti M."/>
            <person name="Forterre P."/>
            <person name="Koonin E."/>
            <person name="Raoult D."/>
        </authorList>
    </citation>
    <scope>NUCLEOTIDE SEQUENCE [GENOMIC DNA]</scope>
</reference>